<proteinExistence type="evidence at protein level"/>
<protein>
    <recommendedName>
        <fullName evidence="10">Chromatin remodeling regulator CECR2</fullName>
    </recommendedName>
    <alternativeName>
        <fullName>Cat eye syndrome critical region protein 2 homolog</fullName>
    </alternativeName>
</protein>
<keyword id="KW-0025">Alternative splicing</keyword>
<keyword id="KW-0103">Bromodomain</keyword>
<keyword id="KW-0156">Chromatin regulator</keyword>
<keyword id="KW-0488">Methylation</keyword>
<keyword id="KW-0539">Nucleus</keyword>
<keyword id="KW-0597">Phosphoprotein</keyword>
<keyword id="KW-1185">Reference proteome</keyword>
<sequence length="1453" mass="161530">MCPEEGGAAGLGELRSWWEVPAIAHFCSLFRTAFRLPDFEIEELEAALHRDDVEFISDLIACLLQGCYQRRDITPQTFHSYLEDIINYRWELEEGKPNPLREASFQDLPLRTRVEILHRLCDYRLDADDVFDLLKGLDADSLRVEPLGEDNSGALYWYFYGTRMYKEDPVQGRSNGELSLCRESERQKNVSNVPGKTGKRRGRPPKRKKLQEEIISSEKQEENSLTSDLQTRNGSRGPGQGTWWLLCQTEEEWRQVTESFRERTSLRERQLYKLLSEDFLPEICNMIAQKGKRPQRTKPELQHRFMSDHLSIKSIKLEETPMLTKIEKQKRREEEEERQLLLAVQKKEQEQMLKEERKREMEEKVKAVEDRAKRRKLREERAWLLAQGKELPPELSHLDLNSPMREGKKTKDLFELDDDFTAMYKVLDVVKAHKDSWPFLEPVDESYAPNYYQIIKIPMDISSMEKKLNGGLYCNKEEFVNDMKTMFRNCRKYNGDSSEYTKMSDNLERCFHRAMTKHFPGEDGDTDEEFWIKEDEKREKRRSRSGRSSGSHVWTRSRDTEGSSRKQPPVENGGKSLPPARRAASSGDDQSRSSIQLPPEVGTSHGQGFSRPLHCGRVPSHAPPLNQMRPAAPGTFGSLQGSDPTNLHGSSRIPEAPPGEPLQHPPFAIQAPVGISNHRGSLLSAPDLSNMGSHVPSLQLGQMNCPSQDGNMYPPAPFQAGFIPSRHGGTPARPPDFPESSEIPPGHIYHSYKYLNRAHPAVWNGNHGTTNPGRLGPDEKPHLGPGPSHHPHTLGHMMDGRVMRQPIPPNQWTKQSSFLPHGVPSSGYMQPPCKSAGHRLQPPPTPAPSPRFRGPSQALRGAQGGESMMDSPEMIAMQQLSSRVCPPGVPYHPRQPTPPQLPGPFPQVAHSASVCVSAPKPALDNPGSTQEMTETHEPEEDPAEPLPGHEEKAASICSSEGVYLKQLPHPAPPLQASCTRQSSPQERETEDSQLKSDASDSADTYKTSKNKNTWPLDNSYSSPAVQGCLRDLSIVAETGNLPENGVVGEASPCRSEGKGLDGSGSEKPLCPRGKTLQEAVPCTGPNATTPPCTDPSLMAATVNQFSPLYMPGIEYSNSATQYPMSPSLQGLASMMGGKSSGSQPQSFPPRGFQANGPHPGLFPRYRPQQGMRYSYQPPSQPSYHPYQRTPYYTCPQGFSDWQRSLPSQRSPSGPPGSHPPRSLFSEKNVLSSLQGCETLNTALTSPTQMDVVTAKVVPPDGHNSGPEEEKMDESVERPESPKEFLDLDNHNAATKRQNSLSTSDYLYGTPPPSLSSGMTFGSSAFPPHSVMLQTGSPYTPQRSASHFQPRAYPSPVPAHPPPHPVATQPNGLSPEDSLYCCQEEGLGHFQASMMEQTGTGSGLRGSFQEVHRPPGLQMHPVQSQSLFPKTPAPAASPEQLPPHKTPTLPLDQS</sequence>
<accession>E9Q2Z1</accession>
<accession>E9QA25</accession>
<accession>F6VR46</accession>
<accession>F7B218</accession>
<accession>Q6PAQ2</accession>
<accession>Q6ZPI9</accession>
<dbReference type="EMBL" id="AC084273">
    <property type="status" value="NOT_ANNOTATED_CDS"/>
    <property type="molecule type" value="Genomic_DNA"/>
</dbReference>
<dbReference type="EMBL" id="AC135105">
    <property type="status" value="NOT_ANNOTATED_CDS"/>
    <property type="molecule type" value="Genomic_DNA"/>
</dbReference>
<dbReference type="EMBL" id="AK129435">
    <property type="protein sequence ID" value="BAC98245.1"/>
    <property type="molecule type" value="mRNA"/>
</dbReference>
<dbReference type="EMBL" id="BC060152">
    <property type="protein sequence ID" value="AAH60152.1"/>
    <property type="molecule type" value="mRNA"/>
</dbReference>
<dbReference type="CCDS" id="CCDS51890.1">
    <molecule id="E9Q2Z1-2"/>
</dbReference>
<dbReference type="CCDS" id="CCDS90117.1">
    <molecule id="E9Q2Z1-1"/>
</dbReference>
<dbReference type="RefSeq" id="NP_001121623.1">
    <molecule id="E9Q2Z1-2"/>
    <property type="nucleotide sequence ID" value="NM_001128151.2"/>
</dbReference>
<dbReference type="RefSeq" id="NP_001355635.1">
    <molecule id="E9Q2Z1-1"/>
    <property type="nucleotide sequence ID" value="NM_001368706.1"/>
</dbReference>
<dbReference type="RefSeq" id="XP_006506383.1">
    <property type="nucleotide sequence ID" value="XM_006506320.1"/>
</dbReference>
<dbReference type="SMR" id="E9Q2Z1"/>
<dbReference type="ComplexPortal" id="CPX-25737">
    <property type="entry name" value="CERF chromatin remodelling complex, Smarca5 variant"/>
</dbReference>
<dbReference type="ComplexPortal" id="CPX-454">
    <property type="entry name" value="CERF chromatin remodelling complex, Smarca1 variant"/>
</dbReference>
<dbReference type="FunCoup" id="E9Q2Z1">
    <property type="interactions" value="918"/>
</dbReference>
<dbReference type="STRING" id="10090.ENSMUSP00000108306"/>
<dbReference type="GlyGen" id="E9Q2Z1">
    <property type="glycosylation" value="2 sites"/>
</dbReference>
<dbReference type="iPTMnet" id="E9Q2Z1"/>
<dbReference type="PhosphoSitePlus" id="E9Q2Z1"/>
<dbReference type="PaxDb" id="10090-ENSMUSP00000108306"/>
<dbReference type="PeptideAtlas" id="E9Q2Z1"/>
<dbReference type="ProteomicsDB" id="280056">
    <molecule id="E9Q2Z1-1"/>
</dbReference>
<dbReference type="ProteomicsDB" id="280057">
    <molecule id="E9Q2Z1-2"/>
</dbReference>
<dbReference type="Antibodypedia" id="283">
    <property type="antibodies" value="65 antibodies from 22 providers"/>
</dbReference>
<dbReference type="Ensembl" id="ENSMUST00000100993.9">
    <molecule id="E9Q2Z1-1"/>
    <property type="protein sequence ID" value="ENSMUSP00000098556.3"/>
    <property type="gene ID" value="ENSMUSG00000071226.12"/>
</dbReference>
<dbReference type="Ensembl" id="ENSMUST00000112686.8">
    <molecule id="E9Q2Z1-2"/>
    <property type="protein sequence ID" value="ENSMUSP00000108306.2"/>
    <property type="gene ID" value="ENSMUSG00000071226.12"/>
</dbReference>
<dbReference type="GeneID" id="330409"/>
<dbReference type="KEGG" id="mmu:330409"/>
<dbReference type="AGR" id="MGI:1923799"/>
<dbReference type="CTD" id="27443"/>
<dbReference type="MGI" id="MGI:1923799">
    <property type="gene designation" value="Cecr2"/>
</dbReference>
<dbReference type="VEuPathDB" id="HostDB:ENSMUSG00000071226"/>
<dbReference type="eggNOG" id="KOG1472">
    <property type="taxonomic scope" value="Eukaryota"/>
</dbReference>
<dbReference type="GeneTree" id="ENSGT00940000160360"/>
<dbReference type="InParanoid" id="E9Q2Z1"/>
<dbReference type="OMA" id="HQGMRYP"/>
<dbReference type="OrthoDB" id="303107at2759"/>
<dbReference type="PhylomeDB" id="E9Q2Z1"/>
<dbReference type="TreeFam" id="TF324727"/>
<dbReference type="BioGRID-ORCS" id="330409">
    <property type="hits" value="2 hits in 84 CRISPR screens"/>
</dbReference>
<dbReference type="ChiTaRS" id="Cecr2">
    <property type="organism name" value="mouse"/>
</dbReference>
<dbReference type="PRO" id="PR:E9Q2Z1"/>
<dbReference type="Proteomes" id="UP000000589">
    <property type="component" value="Chromosome 6"/>
</dbReference>
<dbReference type="RNAct" id="E9Q2Z1">
    <property type="molecule type" value="protein"/>
</dbReference>
<dbReference type="Bgee" id="ENSMUSG00000071226">
    <property type="expression patterns" value="Expressed in animal zygote and 135 other cell types or tissues"/>
</dbReference>
<dbReference type="ExpressionAtlas" id="E9Q2Z1">
    <property type="expression patterns" value="baseline and differential"/>
</dbReference>
<dbReference type="GO" id="GO:0090537">
    <property type="term" value="C:CERF complex"/>
    <property type="evidence" value="ECO:0000314"/>
    <property type="project" value="UniProtKB"/>
</dbReference>
<dbReference type="GO" id="GO:0000791">
    <property type="term" value="C:euchromatin"/>
    <property type="evidence" value="ECO:0000314"/>
    <property type="project" value="MGI"/>
</dbReference>
<dbReference type="GO" id="GO:0031010">
    <property type="term" value="C:ISWI-type complex"/>
    <property type="evidence" value="ECO:0000353"/>
    <property type="project" value="MGI"/>
</dbReference>
<dbReference type="GO" id="GO:0005634">
    <property type="term" value="C:nucleus"/>
    <property type="evidence" value="ECO:0000314"/>
    <property type="project" value="UniProtKB"/>
</dbReference>
<dbReference type="GO" id="GO:0140658">
    <property type="term" value="F:ATP-dependent chromatin remodeler activity"/>
    <property type="evidence" value="ECO:0000266"/>
    <property type="project" value="MGI"/>
</dbReference>
<dbReference type="GO" id="GO:0006338">
    <property type="term" value="P:chromatin remodeling"/>
    <property type="evidence" value="ECO:0000303"/>
    <property type="project" value="ComplexPortal"/>
</dbReference>
<dbReference type="GO" id="GO:0090102">
    <property type="term" value="P:cochlea development"/>
    <property type="evidence" value="ECO:0000315"/>
    <property type="project" value="MGI"/>
</dbReference>
<dbReference type="GO" id="GO:0097194">
    <property type="term" value="P:execution phase of apoptosis"/>
    <property type="evidence" value="ECO:0007669"/>
    <property type="project" value="Ensembl"/>
</dbReference>
<dbReference type="GO" id="GO:0060122">
    <property type="term" value="P:inner ear receptor cell stereocilium organization"/>
    <property type="evidence" value="ECO:0000315"/>
    <property type="project" value="MGI"/>
</dbReference>
<dbReference type="GO" id="GO:0001842">
    <property type="term" value="P:neural fold formation"/>
    <property type="evidence" value="ECO:0000315"/>
    <property type="project" value="MGI"/>
</dbReference>
<dbReference type="GO" id="GO:0001843">
    <property type="term" value="P:neural tube closure"/>
    <property type="evidence" value="ECO:0000315"/>
    <property type="project" value="MGI"/>
</dbReference>
<dbReference type="GO" id="GO:0021915">
    <property type="term" value="P:neural tube development"/>
    <property type="evidence" value="ECO:0000315"/>
    <property type="project" value="MGI"/>
</dbReference>
<dbReference type="GO" id="GO:0007338">
    <property type="term" value="P:single fertilization"/>
    <property type="evidence" value="ECO:0000315"/>
    <property type="project" value="MGI"/>
</dbReference>
<dbReference type="CDD" id="cd05509">
    <property type="entry name" value="Bromo_gcn5_like"/>
    <property type="match status" value="1"/>
</dbReference>
<dbReference type="FunFam" id="1.20.920.10:FF:000027">
    <property type="entry name" value="Cat eye syndrome critical region protein 2"/>
    <property type="match status" value="1"/>
</dbReference>
<dbReference type="Gene3D" id="1.20.920.10">
    <property type="entry name" value="Bromodomain-like"/>
    <property type="match status" value="1"/>
</dbReference>
<dbReference type="InterPro" id="IPR001487">
    <property type="entry name" value="Bromodomain"/>
</dbReference>
<dbReference type="InterPro" id="IPR036427">
    <property type="entry name" value="Bromodomain-like_sf"/>
</dbReference>
<dbReference type="InterPro" id="IPR018359">
    <property type="entry name" value="Bromodomain_CS"/>
</dbReference>
<dbReference type="InterPro" id="IPR029614">
    <property type="entry name" value="CECR2"/>
</dbReference>
<dbReference type="PANTHER" id="PTHR47092">
    <property type="entry name" value="CAT EYE SYNDROME CRITICAL REGION PROTEIN 2"/>
    <property type="match status" value="1"/>
</dbReference>
<dbReference type="PANTHER" id="PTHR47092:SF1">
    <property type="entry name" value="CHROMATIN REMODELING REGULATOR CECR2"/>
    <property type="match status" value="1"/>
</dbReference>
<dbReference type="Pfam" id="PF00439">
    <property type="entry name" value="Bromodomain"/>
    <property type="match status" value="1"/>
</dbReference>
<dbReference type="PRINTS" id="PR00503">
    <property type="entry name" value="BROMODOMAIN"/>
</dbReference>
<dbReference type="SMART" id="SM00297">
    <property type="entry name" value="BROMO"/>
    <property type="match status" value="1"/>
</dbReference>
<dbReference type="SUPFAM" id="SSF47370">
    <property type="entry name" value="Bromodomain"/>
    <property type="match status" value="1"/>
</dbReference>
<dbReference type="PROSITE" id="PS00633">
    <property type="entry name" value="BROMODOMAIN_1"/>
    <property type="match status" value="1"/>
</dbReference>
<dbReference type="PROSITE" id="PS50014">
    <property type="entry name" value="BROMODOMAIN_2"/>
    <property type="match status" value="1"/>
</dbReference>
<comment type="function">
    <text evidence="1 4 5 6 7">Regulatory subunit of the ATP-dependent CERF-1 and CERF-5 ISWI chromatin remodeling complexes, which form ordered nucleosome arrays on chromatin and facilitate access to DNA during DNA-templated processes such as DNA replication, transcription, and repair (By similarity). The complexes do not have the ability to slide mononucleosomes to the center of a DNA template (By similarity). The CERF-1 ISWI chromatin remodeling complex has a lower ATP hydrolysis rate than the CERF-5 ISWI chromatin remodeling complex (By similarity). Plays a role in various processes during development: required during embryogenesis for neural tube closure and inner ear development (PubMed:15640247, PubMed:20589882, PubMed:21246654). In adults, required for spermatogenesis, via the formation of ISWI-type chromatin complexes (PubMed:22154806). In histone-modifying complexes, CECR2 recognizes and binds acylated histones: binds histones that are acetylated and/or butyrylated (By similarity). May also be involved through its interaction with LRPPRC in the integration of cytoskeletal network with vesicular trafficking, nucleocytosolic shuttling, transcription, chromosome remodeling and cytokinesis (By similarity).</text>
</comment>
<comment type="subunit">
    <text evidence="1 8">Component of the CERF-1 ISWI chromatin remodeling complex (also called the CECR2-containing remodeling factor (CERF) complex) at least composed of CECR2 and SMARCA1 (PubMed:34197713). Component of the CERF-5 ISWI chromatin remodeling complex at least composed of CECR2 and SMARCA5/SNF2H (By similarity). LUZP1 is detected as part of the CERF-1 and CERF-5 complexes in embryonic stem (ES) cells where it is involved in complex stabilization but is not detected in the complexes in the testis (PubMed:34197713). Interacts with CCAR2; CCAR2 may form part of the CERF-1 and/or CEF-5 ISWI chromatin remodeling complexes in ES cells (PubMed:34197713). Interacts with acetylated lysine residues on histone H2A and H3 (in vitro) (By similarity). Interacts with LRPPRC (By similarity).</text>
</comment>
<comment type="subcellular location">
    <subcellularLocation>
        <location evidence="8">Nucleus</location>
    </subcellularLocation>
</comment>
<comment type="alternative products">
    <event type="alternative splicing"/>
    <isoform>
        <id>E9Q2Z1-1</id>
        <name>1</name>
        <sequence type="displayed"/>
    </isoform>
    <isoform>
        <id>E9Q2Z1-2</id>
        <name>2</name>
        <sequence type="described" ref="VSP_059110"/>
    </isoform>
</comment>
<comment type="developmental stage">
    <text evidence="4 6">In embryos, predominantly expressed in neural tissues (PubMed:15640247). Expressed throughout inner ear development: expressed in the neuroepithelium, head mesenchyme and the cochlear floor (PubMed:21246654).</text>
</comment>
<comment type="domain">
    <text evidence="1">The Bromo domain recognizes and binds acetylated histones. Also recognizes and binds histones that are butyrylated.</text>
</comment>
<comment type="disruption phenotype">
    <text evidence="4 5 6 7">Perinatal death with high penetrance due to cranial neural tube defects (PubMed:15640247, PubMed:20589882). Exencephaly is frequently associated by open eyelids (PubMed:20589882). Defects may be due to misregulation of mesenchymal/ectodermal transcription factors (PubMed:20589882). Fetuses also show specific inner ear defects, such as smaller cochleae as well as rotational defects of sensory cells and extra cell rows in the inner ear reminiscent of planar cell polarity (PCP) mutants (PubMed:21246654). Mutant males non-penetrant for neural tube defects produce smaller litters: mutants have normal seminiferous epithelium morphology, sperm count, motility and morphology, but the mutant spermatozoa are compromised in their ability to fertilize oocytes (PubMed:22154806).</text>
</comment>
<organism>
    <name type="scientific">Mus musculus</name>
    <name type="common">Mouse</name>
    <dbReference type="NCBI Taxonomy" id="10090"/>
    <lineage>
        <taxon>Eukaryota</taxon>
        <taxon>Metazoa</taxon>
        <taxon>Chordata</taxon>
        <taxon>Craniata</taxon>
        <taxon>Vertebrata</taxon>
        <taxon>Euteleostomi</taxon>
        <taxon>Mammalia</taxon>
        <taxon>Eutheria</taxon>
        <taxon>Euarchontoglires</taxon>
        <taxon>Glires</taxon>
        <taxon>Rodentia</taxon>
        <taxon>Myomorpha</taxon>
        <taxon>Muroidea</taxon>
        <taxon>Muridae</taxon>
        <taxon>Murinae</taxon>
        <taxon>Mus</taxon>
        <taxon>Mus</taxon>
    </lineage>
</organism>
<name>CECR2_MOUSE</name>
<gene>
    <name evidence="11" type="primary">Cecr2</name>
    <name evidence="9" type="synonym">Kiaa1740</name>
</gene>
<reference key="1">
    <citation type="journal article" date="2009" name="PLoS Biol.">
        <title>Lineage-specific biology revealed by a finished genome assembly of the mouse.</title>
        <authorList>
            <person name="Church D.M."/>
            <person name="Goodstadt L."/>
            <person name="Hillier L.W."/>
            <person name="Zody M.C."/>
            <person name="Goldstein S."/>
            <person name="She X."/>
            <person name="Bult C.J."/>
            <person name="Agarwala R."/>
            <person name="Cherry J.L."/>
            <person name="DiCuccio M."/>
            <person name="Hlavina W."/>
            <person name="Kapustin Y."/>
            <person name="Meric P."/>
            <person name="Maglott D."/>
            <person name="Birtle Z."/>
            <person name="Marques A.C."/>
            <person name="Graves T."/>
            <person name="Zhou S."/>
            <person name="Teague B."/>
            <person name="Potamousis K."/>
            <person name="Churas C."/>
            <person name="Place M."/>
            <person name="Herschleb J."/>
            <person name="Runnheim R."/>
            <person name="Forrest D."/>
            <person name="Amos-Landgraf J."/>
            <person name="Schwartz D.C."/>
            <person name="Cheng Z."/>
            <person name="Lindblad-Toh K."/>
            <person name="Eichler E.E."/>
            <person name="Ponting C.P."/>
        </authorList>
    </citation>
    <scope>NUCLEOTIDE SEQUENCE [LARGE SCALE GENOMIC DNA]</scope>
    <source>
        <strain>C57BL/6J</strain>
    </source>
</reference>
<reference key="2">
    <citation type="journal article" date="2003" name="DNA Res.">
        <title>Prediction of the coding sequences of mouse homologues of KIAA gene: III. The complete nucleotide sequences of 500 mouse KIAA-homologous cDNAs identified by screening of terminal sequences of cDNA clones randomly sampled from size-fractionated libraries.</title>
        <authorList>
            <person name="Okazaki N."/>
            <person name="Kikuno R."/>
            <person name="Ohara R."/>
            <person name="Inamoto S."/>
            <person name="Koseki H."/>
            <person name="Hiraoka S."/>
            <person name="Saga Y."/>
            <person name="Nagase T."/>
            <person name="Ohara O."/>
            <person name="Koga H."/>
        </authorList>
    </citation>
    <scope>NUCLEOTIDE SEQUENCE [LARGE SCALE MRNA] OF 448-1425 (ISOFORM 2)</scope>
    <source>
        <tissue>Embryonic tail</tissue>
    </source>
</reference>
<reference key="3">
    <citation type="journal article" date="2004" name="Genome Res.">
        <title>The status, quality, and expansion of the NIH full-length cDNA project: the Mammalian Gene Collection (MGC).</title>
        <authorList>
            <consortium name="The MGC Project Team"/>
        </authorList>
    </citation>
    <scope>NUCLEOTIDE SEQUENCE [LARGE SCALE MRNA] OF 1188-1453</scope>
    <source>
        <strain>C57BL/6J</strain>
        <tissue>Brain</tissue>
    </source>
</reference>
<reference key="4">
    <citation type="journal article" date="2005" name="Hum. Mol. Genet.">
        <title>CECR2, a protein involved in neurulation, forms a novel chromatin remodeling complex with SNF2L.</title>
        <authorList>
            <person name="Banting G.S."/>
            <person name="Barak O."/>
            <person name="Ames T.M."/>
            <person name="Burnham A.C."/>
            <person name="Kardel M.D."/>
            <person name="Cooch N.S."/>
            <person name="Davidson C.E."/>
            <person name="Godbout R."/>
            <person name="McDermid H.E."/>
            <person name="Shiekhattar R."/>
        </authorList>
    </citation>
    <scope>FUNCTION</scope>
    <scope>DISRUPTION PHENOTYPE</scope>
    <scope>DEVELOPMENTAL STAGE</scope>
</reference>
<reference key="5">
    <citation type="journal article" date="2010" name="Birth Defects Res. A Clin. Mol. Teratol.">
        <title>Cecr2 mutations causing exencephaly trigger misregulation of mesenchymal/ectodermal transcription factors.</title>
        <authorList>
            <person name="Fairbridge N.A."/>
            <person name="Dawe C.E."/>
            <person name="Niri F.H."/>
            <person name="Kooistra M.K."/>
            <person name="King-Jones K."/>
            <person name="McDermid H.E."/>
        </authorList>
    </citation>
    <scope>FUNCTION</scope>
    <scope>DISRUPTION PHENOTYPE</scope>
</reference>
<reference key="6">
    <citation type="journal article" date="2010" name="Cell">
        <title>A tissue-specific atlas of mouse protein phosphorylation and expression.</title>
        <authorList>
            <person name="Huttlin E.L."/>
            <person name="Jedrychowski M.P."/>
            <person name="Elias J.E."/>
            <person name="Goswami T."/>
            <person name="Rad R."/>
            <person name="Beausoleil S.A."/>
            <person name="Villen J."/>
            <person name="Haas W."/>
            <person name="Sowa M.E."/>
            <person name="Gygi S.P."/>
        </authorList>
    </citation>
    <scope>PHOSPHORYLATION [LARGE SCALE ANALYSIS] AT THR-526</scope>
    <scope>IDENTIFICATION BY MASS SPECTROMETRY [LARGE SCALE ANALYSIS]</scope>
    <source>
        <tissue>Spleen</tissue>
    </source>
</reference>
<reference key="7">
    <citation type="journal article" date="2011" name="Dev. Dyn.">
        <title>Role of chromatin remodeling gene Cecr2 in neurulation and inner ear development.</title>
        <authorList>
            <person name="Dawe C.E."/>
            <person name="Kooistra M.K."/>
            <person name="Fairbridge N.A."/>
            <person name="Pisio A.C."/>
            <person name="McDermid H.E."/>
        </authorList>
    </citation>
    <scope>FUNCTION</scope>
    <scope>DISRUPTION PHENOTYPE</scope>
    <scope>DEVELOPMENTAL STAGE</scope>
</reference>
<reference key="8">
    <citation type="journal article" date="2012" name="J. Mol. Biol.">
        <title>CECR2 is involved in spermatogenesis and forms a complex with SNF2H in the testis.</title>
        <authorList>
            <person name="Thompson P.J."/>
            <person name="Norton K.A."/>
            <person name="Niri F.H."/>
            <person name="Dawe C.E."/>
            <person name="McDermid H.E."/>
        </authorList>
    </citation>
    <scope>FUNCTION</scope>
    <scope>DISRUPTION PHENOTYPE</scope>
</reference>
<reference key="9">
    <citation type="journal article" date="2014" name="Mol. Cell. Proteomics">
        <title>Immunoaffinity enrichment and mass spectrometry analysis of protein methylation.</title>
        <authorList>
            <person name="Guo A."/>
            <person name="Gu H."/>
            <person name="Zhou J."/>
            <person name="Mulhern D."/>
            <person name="Wang Y."/>
            <person name="Lee K.A."/>
            <person name="Yang V."/>
            <person name="Aguiar M."/>
            <person name="Kornhauser J."/>
            <person name="Jia X."/>
            <person name="Ren J."/>
            <person name="Beausoleil S.A."/>
            <person name="Silva J.C."/>
            <person name="Vemulapalli V."/>
            <person name="Bedford M.T."/>
            <person name="Comb M.J."/>
        </authorList>
    </citation>
    <scope>METHYLATION [LARGE SCALE ANALYSIS] AT ARG-1166 AND ARG-1172</scope>
    <scope>IDENTIFICATION BY MASS SPECTROMETRY [LARGE SCALE ANALYSIS]</scope>
    <source>
        <tissue>Embryo</tissue>
    </source>
</reference>
<reference key="10">
    <citation type="journal article" date="2021" name="Biochem. Cell Biol.">
        <title>Chromatin remodeling factor CECR2 forms tissue-specific complexes with CCAR2 and LUZP1.</title>
        <authorList>
            <person name="Niri F."/>
            <person name="Terpstra A.N."/>
            <person name="Lim K.R.Q."/>
            <person name="McDermid H.E."/>
        </authorList>
    </citation>
    <scope>IDENTIFICATION IN THE CERF-1 AND CERF-5 COMPLEXES</scope>
    <scope>INTERACTION WITH CCAR2</scope>
    <scope>SUBCELLULAR LOCATION</scope>
</reference>
<evidence type="ECO:0000250" key="1">
    <source>
        <dbReference type="UniProtKB" id="Q9BXF3"/>
    </source>
</evidence>
<evidence type="ECO:0000255" key="2">
    <source>
        <dbReference type="PROSITE-ProRule" id="PRU00035"/>
    </source>
</evidence>
<evidence type="ECO:0000256" key="3">
    <source>
        <dbReference type="SAM" id="MobiDB-lite"/>
    </source>
</evidence>
<evidence type="ECO:0000269" key="4">
    <source>
    </source>
</evidence>
<evidence type="ECO:0000269" key="5">
    <source>
    </source>
</evidence>
<evidence type="ECO:0000269" key="6">
    <source>
    </source>
</evidence>
<evidence type="ECO:0000269" key="7">
    <source>
    </source>
</evidence>
<evidence type="ECO:0000269" key="8">
    <source>
    </source>
</evidence>
<evidence type="ECO:0000303" key="9">
    <source>
    </source>
</evidence>
<evidence type="ECO:0000305" key="10"/>
<evidence type="ECO:0000312" key="11">
    <source>
        <dbReference type="MGI" id="MGI:1923799"/>
    </source>
</evidence>
<evidence type="ECO:0007744" key="12">
    <source>
    </source>
</evidence>
<evidence type="ECO:0007744" key="13">
    <source>
    </source>
</evidence>
<feature type="chain" id="PRO_0000441775" description="Chromatin remodeling regulator CECR2">
    <location>
        <begin position="1"/>
        <end position="1453"/>
    </location>
</feature>
<feature type="domain" description="Bromo" evidence="2">
    <location>
        <begin position="414"/>
        <end position="518"/>
    </location>
</feature>
<feature type="region of interest" description="Disordered" evidence="3">
    <location>
        <begin position="170"/>
        <end position="237"/>
    </location>
</feature>
<feature type="region of interest" description="Disordered" evidence="3">
    <location>
        <begin position="536"/>
        <end position="667"/>
    </location>
</feature>
<feature type="region of interest" description="Disordered" evidence="3">
    <location>
        <begin position="767"/>
        <end position="796"/>
    </location>
</feature>
<feature type="region of interest" description="Disordered" evidence="3">
    <location>
        <begin position="827"/>
        <end position="868"/>
    </location>
</feature>
<feature type="region of interest" description="Disordered" evidence="3">
    <location>
        <begin position="884"/>
        <end position="1020"/>
    </location>
</feature>
<feature type="region of interest" description="Disordered" evidence="3">
    <location>
        <begin position="1046"/>
        <end position="1072"/>
    </location>
</feature>
<feature type="region of interest" description="Disordered" evidence="3">
    <location>
        <begin position="1131"/>
        <end position="1308"/>
    </location>
</feature>
<feature type="region of interest" description="Disordered" evidence="3">
    <location>
        <begin position="1331"/>
        <end position="1368"/>
    </location>
</feature>
<feature type="region of interest" description="Disordered" evidence="3">
    <location>
        <begin position="1396"/>
        <end position="1453"/>
    </location>
</feature>
<feature type="compositionally biased region" description="Basic residues" evidence="3">
    <location>
        <begin position="197"/>
        <end position="209"/>
    </location>
</feature>
<feature type="compositionally biased region" description="Basic and acidic residues" evidence="3">
    <location>
        <begin position="210"/>
        <end position="222"/>
    </location>
</feature>
<feature type="compositionally biased region" description="Polar residues" evidence="3">
    <location>
        <begin position="223"/>
        <end position="234"/>
    </location>
</feature>
<feature type="compositionally biased region" description="Polar residues" evidence="3">
    <location>
        <begin position="637"/>
        <end position="649"/>
    </location>
</feature>
<feature type="compositionally biased region" description="Pro residues" evidence="3">
    <location>
        <begin position="655"/>
        <end position="664"/>
    </location>
</feature>
<feature type="compositionally biased region" description="Pro residues" evidence="3">
    <location>
        <begin position="887"/>
        <end position="905"/>
    </location>
</feature>
<feature type="compositionally biased region" description="Basic and acidic residues" evidence="3">
    <location>
        <begin position="985"/>
        <end position="998"/>
    </location>
</feature>
<feature type="compositionally biased region" description="Polar residues" evidence="3">
    <location>
        <begin position="999"/>
        <end position="1020"/>
    </location>
</feature>
<feature type="compositionally biased region" description="Low complexity" evidence="3">
    <location>
        <begin position="1173"/>
        <end position="1187"/>
    </location>
</feature>
<feature type="compositionally biased region" description="Low complexity" evidence="3">
    <location>
        <begin position="1202"/>
        <end position="1211"/>
    </location>
</feature>
<feature type="compositionally biased region" description="Polar residues" evidence="3">
    <location>
        <begin position="1228"/>
        <end position="1250"/>
    </location>
</feature>
<feature type="compositionally biased region" description="Basic and acidic residues" evidence="3">
    <location>
        <begin position="1265"/>
        <end position="1289"/>
    </location>
</feature>
<feature type="compositionally biased region" description="Polar residues" evidence="3">
    <location>
        <begin position="1291"/>
        <end position="1304"/>
    </location>
</feature>
<feature type="compositionally biased region" description="Polar residues" evidence="3">
    <location>
        <begin position="1331"/>
        <end position="1346"/>
    </location>
</feature>
<feature type="compositionally biased region" description="Pro residues" evidence="3">
    <location>
        <begin position="1352"/>
        <end position="1364"/>
    </location>
</feature>
<feature type="modified residue" description="Phosphoserine" evidence="1">
    <location>
        <position position="402"/>
    </location>
</feature>
<feature type="modified residue" description="Phosphothreonine" evidence="12">
    <location>
        <position position="526"/>
    </location>
</feature>
<feature type="modified residue" description="Phosphoserine" evidence="1">
    <location>
        <position position="551"/>
    </location>
</feature>
<feature type="modified residue" description="Phosphoserine" evidence="1">
    <location>
        <position position="983"/>
    </location>
</feature>
<feature type="modified residue" description="Asymmetric dimethylarginine" evidence="13">
    <location>
        <position position="1166"/>
    </location>
</feature>
<feature type="modified residue" description="Asymmetric dimethylarginine" evidence="13">
    <location>
        <position position="1172"/>
    </location>
</feature>
<feature type="modified residue" description="Phosphoserine" evidence="1">
    <location>
        <position position="1280"/>
    </location>
</feature>
<feature type="splice variant" id="VSP_059110" description="In isoform 2.">
    <location>
        <begin position="601"/>
        <end position="628"/>
    </location>
</feature>